<keyword id="KW-0539">Nucleus</keyword>
<keyword id="KW-1185">Reference proteome</keyword>
<name>IWS1_CAEEL</name>
<reference key="1">
    <citation type="journal article" date="1998" name="Science">
        <title>Genome sequence of the nematode C. elegans: a platform for investigating biology.</title>
        <authorList>
            <consortium name="The C. elegans sequencing consortium"/>
        </authorList>
    </citation>
    <scope>NUCLEOTIDE SEQUENCE [LARGE SCALE GENOMIC DNA]</scope>
    <source>
        <strain>Bristol N2</strain>
    </source>
</reference>
<sequence length="511" mass="57253">MSDHEEESHGASPTSPASSGASSPLAPISPRSEGNAPESPSGDVQDIYKDESFEAPASPARDSSAPASPSAASPAGSRSPSPSPVKTKSKVMIDSDEDSDAEESANKRALIDSDASDAEGKKRRVMLDSDDSDHEGTSKKEPTTKNLFGDDSDDDDEDRPKKTNDLDEFVEGRDEEESQETSKPAYDSDDDDGPVDRHGRHFEWDFDKMLAEKKAERKKKTRRGGKDGGIDIINDDDGTVSRLVERMKHAAKSDRNANIERKPAFQKIKMLPEVKAIMLRAGIVEVLIENGFMSALSEWLAPLPDKCLPALDIRITVLKLLHNPRFWKLDRSTLKQSGLGKAVMMLYKHPNETKENKGIANKLIGEWARPIYHLDTDYSTVSRQEREERDYSRMPEKRKKKINSRDEEEPNDDDQPKRPRIRDADEMGPTKSDDLKPGDKGYIPRARVPKPSTKDYVIRPEWRVTGAFKGEKKSTGNNRYDQTFRDFQERTKKSKANRIVKVSLEGRNMGI</sequence>
<evidence type="ECO:0000255" key="1">
    <source>
        <dbReference type="PROSITE-ProRule" id="PRU00649"/>
    </source>
</evidence>
<evidence type="ECO:0000256" key="2">
    <source>
        <dbReference type="SAM" id="MobiDB-lite"/>
    </source>
</evidence>
<evidence type="ECO:0000305" key="3"/>
<evidence type="ECO:0000312" key="4">
    <source>
        <dbReference type="WormBase" id="F13B12.1"/>
    </source>
</evidence>
<feature type="chain" id="PRO_0000083352" description="IWS1-like protein">
    <location>
        <begin position="1"/>
        <end position="511"/>
    </location>
</feature>
<feature type="domain" description="TFIIS N-terminal" evidence="1">
    <location>
        <begin position="294"/>
        <end position="374"/>
    </location>
</feature>
<feature type="region of interest" description="Disordered" evidence="2">
    <location>
        <begin position="1"/>
        <end position="200"/>
    </location>
</feature>
<feature type="region of interest" description="Disordered" evidence="2">
    <location>
        <begin position="382"/>
        <end position="454"/>
    </location>
</feature>
<feature type="compositionally biased region" description="Low complexity" evidence="2">
    <location>
        <begin position="11"/>
        <end position="30"/>
    </location>
</feature>
<feature type="compositionally biased region" description="Low complexity" evidence="2">
    <location>
        <begin position="55"/>
        <end position="86"/>
    </location>
</feature>
<feature type="compositionally biased region" description="Acidic residues" evidence="2">
    <location>
        <begin position="94"/>
        <end position="103"/>
    </location>
</feature>
<feature type="compositionally biased region" description="Basic and acidic residues" evidence="2">
    <location>
        <begin position="134"/>
        <end position="143"/>
    </location>
</feature>
<feature type="compositionally biased region" description="Acidic residues" evidence="2">
    <location>
        <begin position="166"/>
        <end position="179"/>
    </location>
</feature>
<feature type="compositionally biased region" description="Basic and acidic residues" evidence="2">
    <location>
        <begin position="383"/>
        <end position="395"/>
    </location>
</feature>
<feature type="compositionally biased region" description="Basic and acidic residues" evidence="2">
    <location>
        <begin position="414"/>
        <end position="425"/>
    </location>
</feature>
<proteinExistence type="inferred from homology"/>
<gene>
    <name evidence="4" type="ORF">F13B12.1</name>
</gene>
<comment type="subcellular location">
    <subcellularLocation>
        <location evidence="1">Nucleus</location>
    </subcellularLocation>
</comment>
<comment type="similarity">
    <text evidence="3">Belongs to the IWS1 family.</text>
</comment>
<dbReference type="EMBL" id="Z70683">
    <property type="protein sequence ID" value="CAA94590.1"/>
    <property type="molecule type" value="Genomic_DNA"/>
</dbReference>
<dbReference type="PIR" id="T20820">
    <property type="entry name" value="T20820"/>
</dbReference>
<dbReference type="RefSeq" id="NP_501924.1">
    <property type="nucleotide sequence ID" value="NM_069523.8"/>
</dbReference>
<dbReference type="SMR" id="Q19375"/>
<dbReference type="BioGRID" id="43036">
    <property type="interactions" value="8"/>
</dbReference>
<dbReference type="FunCoup" id="Q19375">
    <property type="interactions" value="1720"/>
</dbReference>
<dbReference type="IntAct" id="Q19375">
    <property type="interactions" value="1"/>
</dbReference>
<dbReference type="MINT" id="Q19375"/>
<dbReference type="STRING" id="6239.F13B12.1.1"/>
<dbReference type="iPTMnet" id="Q19375"/>
<dbReference type="PaxDb" id="6239-F13B12.1"/>
<dbReference type="PeptideAtlas" id="Q19375"/>
<dbReference type="EnsemblMetazoa" id="F13B12.1.1">
    <property type="protein sequence ID" value="F13B12.1.1"/>
    <property type="gene ID" value="WBGene00008729"/>
</dbReference>
<dbReference type="GeneID" id="177934"/>
<dbReference type="KEGG" id="cel:CELE_F13B12.1"/>
<dbReference type="UCSC" id="F13B12.1.1">
    <property type="organism name" value="c. elegans"/>
</dbReference>
<dbReference type="AGR" id="WB:WBGene00008729"/>
<dbReference type="CTD" id="177934"/>
<dbReference type="WormBase" id="F13B12.1">
    <property type="protein sequence ID" value="CE05599"/>
    <property type="gene ID" value="WBGene00008729"/>
</dbReference>
<dbReference type="eggNOG" id="KOG1793">
    <property type="taxonomic scope" value="Eukaryota"/>
</dbReference>
<dbReference type="GeneTree" id="ENSGT00940000169144"/>
<dbReference type="HOGENOM" id="CLU_040584_1_0_1"/>
<dbReference type="InParanoid" id="Q19375"/>
<dbReference type="OMA" id="REMKEMW"/>
<dbReference type="OrthoDB" id="21124at2759"/>
<dbReference type="PhylomeDB" id="Q19375"/>
<dbReference type="Reactome" id="R-CEL-112382">
    <property type="pathway name" value="Formation of RNA Pol II elongation complex"/>
</dbReference>
<dbReference type="Reactome" id="R-CEL-674695">
    <property type="pathway name" value="RNA Polymerase II Pre-transcription Events"/>
</dbReference>
<dbReference type="Reactome" id="R-CEL-75955">
    <property type="pathway name" value="RNA Polymerase II Transcription Elongation"/>
</dbReference>
<dbReference type="PRO" id="PR:Q19375"/>
<dbReference type="Proteomes" id="UP000001940">
    <property type="component" value="Chromosome IV"/>
</dbReference>
<dbReference type="Bgee" id="WBGene00008729">
    <property type="expression patterns" value="Expressed in embryo and 4 other cell types or tissues"/>
</dbReference>
<dbReference type="GO" id="GO:0005634">
    <property type="term" value="C:nucleus"/>
    <property type="evidence" value="ECO:0007005"/>
    <property type="project" value="WormBase"/>
</dbReference>
<dbReference type="GO" id="GO:0016973">
    <property type="term" value="P:poly(A)+ mRNA export from nucleus"/>
    <property type="evidence" value="ECO:0000318"/>
    <property type="project" value="GO_Central"/>
</dbReference>
<dbReference type="FunFam" id="1.20.930.10:FF:000021">
    <property type="entry name" value="IWS1-like protein"/>
    <property type="match status" value="1"/>
</dbReference>
<dbReference type="Gene3D" id="1.20.930.10">
    <property type="entry name" value="Conserved domain common to transcription factors TFIIS, elongin A, CRSP70"/>
    <property type="match status" value="1"/>
</dbReference>
<dbReference type="InterPro" id="IPR051037">
    <property type="entry name" value="RNAPII_TF_IWS1"/>
</dbReference>
<dbReference type="InterPro" id="IPR035441">
    <property type="entry name" value="TFIIS/LEDGF_dom_sf"/>
</dbReference>
<dbReference type="InterPro" id="IPR017923">
    <property type="entry name" value="TFIIS_N"/>
</dbReference>
<dbReference type="PANTHER" id="PTHR46010">
    <property type="entry name" value="PROTEIN IWS1 HOMOLOG"/>
    <property type="match status" value="1"/>
</dbReference>
<dbReference type="PANTHER" id="PTHR46010:SF1">
    <property type="entry name" value="PROTEIN IWS1 HOMOLOG"/>
    <property type="match status" value="1"/>
</dbReference>
<dbReference type="Pfam" id="PF08711">
    <property type="entry name" value="Med26"/>
    <property type="match status" value="1"/>
</dbReference>
<dbReference type="PROSITE" id="PS51319">
    <property type="entry name" value="TFIIS_N"/>
    <property type="match status" value="1"/>
</dbReference>
<organism>
    <name type="scientific">Caenorhabditis elegans</name>
    <dbReference type="NCBI Taxonomy" id="6239"/>
    <lineage>
        <taxon>Eukaryota</taxon>
        <taxon>Metazoa</taxon>
        <taxon>Ecdysozoa</taxon>
        <taxon>Nematoda</taxon>
        <taxon>Chromadorea</taxon>
        <taxon>Rhabditida</taxon>
        <taxon>Rhabditina</taxon>
        <taxon>Rhabditomorpha</taxon>
        <taxon>Rhabditoidea</taxon>
        <taxon>Rhabditidae</taxon>
        <taxon>Peloderinae</taxon>
        <taxon>Caenorhabditis</taxon>
    </lineage>
</organism>
<accession>Q19375</accession>
<protein>
    <recommendedName>
        <fullName>IWS1-like protein</fullName>
    </recommendedName>
</protein>